<keyword id="KW-0007">Acetylation</keyword>
<keyword id="KW-0175">Coiled coil</keyword>
<keyword id="KW-0325">Glycoprotein</keyword>
<keyword id="KW-0403">Intermediate filament</keyword>
<keyword id="KW-1017">Isopeptide bond</keyword>
<keyword id="KW-0416">Keratin</keyword>
<keyword id="KW-0488">Methylation</keyword>
<keyword id="KW-0597">Phosphoprotein</keyword>
<keyword id="KW-1185">Reference proteome</keyword>
<keyword id="KW-0832">Ubl conjugation</keyword>
<organism>
    <name type="scientific">Pan troglodytes</name>
    <name type="common">Chimpanzee</name>
    <dbReference type="NCBI Taxonomy" id="9598"/>
    <lineage>
        <taxon>Eukaryota</taxon>
        <taxon>Metazoa</taxon>
        <taxon>Chordata</taxon>
        <taxon>Craniata</taxon>
        <taxon>Vertebrata</taxon>
        <taxon>Euteleostomi</taxon>
        <taxon>Mammalia</taxon>
        <taxon>Eutheria</taxon>
        <taxon>Euarchontoglires</taxon>
        <taxon>Primates</taxon>
        <taxon>Haplorrhini</taxon>
        <taxon>Catarrhini</taxon>
        <taxon>Hominidae</taxon>
        <taxon>Pan</taxon>
    </lineage>
</organism>
<feature type="initiator methionine" description="Removed" evidence="2">
    <location>
        <position position="1"/>
    </location>
</feature>
<feature type="chain" id="PRO_0000307636" description="Keratin, type II cytoskeletal 7">
    <location>
        <begin position="2"/>
        <end position="469"/>
    </location>
</feature>
<feature type="domain" description="IF rod" evidence="4">
    <location>
        <begin position="91"/>
        <end position="403"/>
    </location>
</feature>
<feature type="region of interest" description="Head" evidence="3">
    <location>
        <begin position="2"/>
        <end position="90"/>
    </location>
</feature>
<feature type="region of interest" description="Coil 1A" evidence="3">
    <location>
        <begin position="90"/>
        <end position="126"/>
    </location>
</feature>
<feature type="region of interest" description="Linker 1" evidence="3">
    <location>
        <begin position="127"/>
        <end position="144"/>
    </location>
</feature>
<feature type="region of interest" description="Coil 1B" evidence="3">
    <location>
        <begin position="145"/>
        <end position="236"/>
    </location>
</feature>
<feature type="region of interest" description="Linker 12" evidence="3">
    <location>
        <begin position="237"/>
        <end position="260"/>
    </location>
</feature>
<feature type="region of interest" description="Coil 2" evidence="3">
    <location>
        <begin position="261"/>
        <end position="399"/>
    </location>
</feature>
<feature type="region of interest" description="Tail" evidence="3">
    <location>
        <begin position="400"/>
        <end position="469"/>
    </location>
</feature>
<feature type="site" description="Stutter" evidence="3">
    <location>
        <position position="343"/>
    </location>
</feature>
<feature type="modified residue" description="N-acetylserine" evidence="2">
    <location>
        <position position="2"/>
    </location>
</feature>
<feature type="modified residue" description="Phosphoserine" evidence="2">
    <location>
        <position position="2"/>
    </location>
</feature>
<feature type="modified residue" description="Phosphoserine" evidence="2">
    <location>
        <position position="6"/>
    </location>
</feature>
<feature type="modified residue" description="Phosphoserine" evidence="2">
    <location>
        <position position="7"/>
    </location>
</feature>
<feature type="modified residue" description="Dimethylated arginine; alternate" evidence="2">
    <location>
        <position position="20"/>
    </location>
</feature>
<feature type="modified residue" description="Omega-N-methylarginine; alternate" evidence="2">
    <location>
        <position position="20"/>
    </location>
</feature>
<feature type="modified residue" description="Phosphoserine" evidence="2">
    <location>
        <position position="53"/>
    </location>
</feature>
<feature type="modified residue" description="Phosphoserine" evidence="2">
    <location>
        <position position="71"/>
    </location>
</feature>
<feature type="modified residue" description="Phosphoserine" evidence="2">
    <location>
        <position position="83"/>
    </location>
</feature>
<feature type="modified residue" description="Phosphothreonine" evidence="2">
    <location>
        <position position="97"/>
    </location>
</feature>
<feature type="modified residue" description="N6-acetyllysine" evidence="2">
    <location>
        <position position="179"/>
    </location>
</feature>
<feature type="modified residue" description="Phosphoserine" evidence="2">
    <location>
        <position position="252"/>
    </location>
</feature>
<feature type="modified residue" description="Phosphoserine" evidence="2">
    <location>
        <position position="254"/>
    </location>
</feature>
<feature type="modified residue" description="Phosphothreonine" evidence="2">
    <location>
        <position position="289"/>
    </location>
</feature>
<feature type="glycosylation site" description="O-linked (GlcNAc) serine" evidence="2">
    <location>
        <position position="12"/>
    </location>
</feature>
<feature type="cross-link" description="Glycyl lysine isopeptide (Lys-Gly) (interchain with G-Cter in SUMO2)" evidence="2">
    <location>
        <position position="130"/>
    </location>
</feature>
<feature type="cross-link" description="Glycyl lysine isopeptide (Lys-Gly) (interchain with G-Cter in SUMO2)" evidence="2">
    <location>
        <position position="265"/>
    </location>
</feature>
<feature type="cross-link" description="Glycyl lysine isopeptide (Lys-Gly) (interchain with G-Cter in SUMO2)" evidence="2">
    <location>
        <position position="286"/>
    </location>
</feature>
<feature type="cross-link" description="Glycyl lysine isopeptide (Lys-Gly) (interchain with G-Cter in SUMO2)" evidence="2">
    <location>
        <position position="296"/>
    </location>
</feature>
<feature type="cross-link" description="Glycyl lysine isopeptide (Lys-Gly) (interchain with G-Cter in SUMO2)" evidence="2">
    <location>
        <position position="331"/>
    </location>
</feature>
<accession>A5A6N0</accession>
<evidence type="ECO:0000250" key="1"/>
<evidence type="ECO:0000250" key="2">
    <source>
        <dbReference type="UniProtKB" id="P08729"/>
    </source>
</evidence>
<evidence type="ECO:0000255" key="3"/>
<evidence type="ECO:0000255" key="4">
    <source>
        <dbReference type="PROSITE-ProRule" id="PRU01188"/>
    </source>
</evidence>
<evidence type="ECO:0000305" key="5"/>
<evidence type="ECO:0000312" key="6">
    <source>
        <dbReference type="EMBL" id="BAF62403.1"/>
    </source>
</evidence>
<dbReference type="EMBL" id="AB222158">
    <property type="protein sequence ID" value="BAF62403.1"/>
    <property type="molecule type" value="mRNA"/>
</dbReference>
<dbReference type="RefSeq" id="NP_001104284.1">
    <property type="nucleotide sequence ID" value="NM_001110814.1"/>
</dbReference>
<dbReference type="SMR" id="A5A6N0"/>
<dbReference type="FunCoup" id="A5A6N0">
    <property type="interactions" value="219"/>
</dbReference>
<dbReference type="STRING" id="9598.ENSPTRP00000091525"/>
<dbReference type="PaxDb" id="9598-ENSPTRP00000008481"/>
<dbReference type="GeneID" id="466983"/>
<dbReference type="KEGG" id="ptr:466983"/>
<dbReference type="CTD" id="3855"/>
<dbReference type="eggNOG" id="ENOG502QURK">
    <property type="taxonomic scope" value="Eukaryota"/>
</dbReference>
<dbReference type="InParanoid" id="A5A6N0"/>
<dbReference type="OrthoDB" id="14945at9604"/>
<dbReference type="Proteomes" id="UP000002277">
    <property type="component" value="Unplaced"/>
</dbReference>
<dbReference type="GO" id="GO:0005829">
    <property type="term" value="C:cytosol"/>
    <property type="evidence" value="ECO:0007669"/>
    <property type="project" value="UniProtKB-ARBA"/>
</dbReference>
<dbReference type="GO" id="GO:0045095">
    <property type="term" value="C:keratin filament"/>
    <property type="evidence" value="ECO:0000318"/>
    <property type="project" value="GO_Central"/>
</dbReference>
<dbReference type="GO" id="GO:0030280">
    <property type="term" value="F:structural constituent of skin epidermis"/>
    <property type="evidence" value="ECO:0000318"/>
    <property type="project" value="GO_Central"/>
</dbReference>
<dbReference type="GO" id="GO:0045109">
    <property type="term" value="P:intermediate filament organization"/>
    <property type="evidence" value="ECO:0000318"/>
    <property type="project" value="GO_Central"/>
</dbReference>
<dbReference type="GO" id="GO:0031424">
    <property type="term" value="P:keratinization"/>
    <property type="evidence" value="ECO:0000318"/>
    <property type="project" value="GO_Central"/>
</dbReference>
<dbReference type="FunFam" id="1.20.5.1160:FF:000001">
    <property type="entry name" value="Keratin type II"/>
    <property type="match status" value="1"/>
</dbReference>
<dbReference type="FunFam" id="1.20.5.170:FF:000004">
    <property type="entry name" value="Keratin, type II cytoskeletal 5"/>
    <property type="match status" value="1"/>
</dbReference>
<dbReference type="FunFam" id="1.20.5.500:FF:000001">
    <property type="entry name" value="Type II keratin 23"/>
    <property type="match status" value="1"/>
</dbReference>
<dbReference type="Gene3D" id="1.20.5.170">
    <property type="match status" value="1"/>
</dbReference>
<dbReference type="Gene3D" id="1.20.5.500">
    <property type="entry name" value="Single helix bin"/>
    <property type="match status" value="1"/>
</dbReference>
<dbReference type="Gene3D" id="1.20.5.1160">
    <property type="entry name" value="Vasodilator-stimulated phosphoprotein"/>
    <property type="match status" value="1"/>
</dbReference>
<dbReference type="InterPro" id="IPR018039">
    <property type="entry name" value="IF_conserved"/>
</dbReference>
<dbReference type="InterPro" id="IPR039008">
    <property type="entry name" value="IF_rod_dom"/>
</dbReference>
<dbReference type="InterPro" id="IPR032444">
    <property type="entry name" value="Keratin_2_head"/>
</dbReference>
<dbReference type="InterPro" id="IPR003054">
    <property type="entry name" value="Keratin_II"/>
</dbReference>
<dbReference type="PANTHER" id="PTHR45616">
    <property type="entry name" value="GATA-TYPE DOMAIN-CONTAINING PROTEIN"/>
    <property type="match status" value="1"/>
</dbReference>
<dbReference type="PANTHER" id="PTHR45616:SF21">
    <property type="entry name" value="KERATIN, TYPE II CYTOSKELETAL 7"/>
    <property type="match status" value="1"/>
</dbReference>
<dbReference type="Pfam" id="PF00038">
    <property type="entry name" value="Filament"/>
    <property type="match status" value="1"/>
</dbReference>
<dbReference type="Pfam" id="PF16208">
    <property type="entry name" value="Keratin_2_head"/>
    <property type="match status" value="1"/>
</dbReference>
<dbReference type="PRINTS" id="PR01276">
    <property type="entry name" value="TYPE2KERATIN"/>
</dbReference>
<dbReference type="SMART" id="SM01391">
    <property type="entry name" value="Filament"/>
    <property type="match status" value="1"/>
</dbReference>
<dbReference type="SUPFAM" id="SSF64593">
    <property type="entry name" value="Intermediate filament protein, coiled coil region"/>
    <property type="match status" value="3"/>
</dbReference>
<dbReference type="SUPFAM" id="SSF46579">
    <property type="entry name" value="Prefoldin"/>
    <property type="match status" value="1"/>
</dbReference>
<dbReference type="PROSITE" id="PS00226">
    <property type="entry name" value="IF_ROD_1"/>
    <property type="match status" value="1"/>
</dbReference>
<dbReference type="PROSITE" id="PS51842">
    <property type="entry name" value="IF_ROD_2"/>
    <property type="match status" value="1"/>
</dbReference>
<name>K2C7_PANTR</name>
<gene>
    <name evidence="6" type="primary">KRT7</name>
</gene>
<sequence>MSIHFSSPVFTSRSAAFSGRGAQVRLSSARPGGLGSSSLYGLGASRPRVAVRSAYGGPVGAGIREVTINQSLLAPLRLDADPSLQRVRQEEREQIKTLNNKFASFIDKVRFLEQQNKLLETKWTLLQEQKSAKSSRLPDIFEAQIAGLRGQLEALQVDGGRLEAELQSMQDVVEDFKNKYEDEINRRAAAENEFVVLKKDVDAAYMSKVELEAKVDALNDEINFLRTLNETELTELQSQISDTSVVLSMDNSRSLDLDGIIAEVKAQYEEMAKCSRAEAEAWYQTKFETLQAQAGKHGDDLRNTRNEISEMNRAIQRLQAEIDNIKDQRAKLEAAIAEAEERGELALKDARAKQEELEAALQRAKQDMARQLREYQELMSVKLALDIEIATYRKLLEGEESRLAGDGVGAVNISVMNSTGGSSSGGGIGLTLGGTMGSNALSFSSSAGPGPLKAYSIRTASASRRSARN</sequence>
<proteinExistence type="evidence at transcript level"/>
<reference evidence="6" key="1">
    <citation type="journal article" date="2007" name="Gene">
        <title>Mapping of chimpanzee full-length cDNAs onto the human genome unveils large potential divergence of the transcriptome.</title>
        <authorList>
            <person name="Sakate R."/>
            <person name="Suto Y."/>
            <person name="Imanishi T."/>
            <person name="Tanoue T."/>
            <person name="Hida M."/>
            <person name="Hayasaka I."/>
            <person name="Kusuda J."/>
            <person name="Gojobori T."/>
            <person name="Hashimoto K."/>
            <person name="Hirai M."/>
        </authorList>
    </citation>
    <scope>NUCLEOTIDE SEQUENCE [MRNA]</scope>
    <source>
        <tissue evidence="6">Skin</tissue>
    </source>
</reference>
<comment type="function">
    <text evidence="1">Blocks interferon-dependent interphase and stimulates DNA synthesis in cells.</text>
</comment>
<comment type="subunit">
    <text evidence="1">Heterotetramer of two type I and two type II keratins. Interacts with eukaryotic translation initiator factor 3 (eIF3) subunit EIF3S10. Interacts with GPER1 (By similarity).</text>
</comment>
<comment type="PTM">
    <text evidence="2">Arg-20 is dimethylated, probably to asymmetric dimethylarginine.</text>
</comment>
<comment type="miscellaneous">
    <text evidence="5">There are two types of cytoskeletal and microfibrillar keratin: I (acidic; 40-55 kDa) and II (neutral to basic; 56-70 kDa).</text>
</comment>
<comment type="similarity">
    <text evidence="4">Belongs to the intermediate filament family.</text>
</comment>
<protein>
    <recommendedName>
        <fullName>Keratin, type II cytoskeletal 7</fullName>
    </recommendedName>
    <alternativeName>
        <fullName>Cytokeratin-7</fullName>
        <shortName>CK-7</shortName>
    </alternativeName>
    <alternativeName>
        <fullName>Keratin-7</fullName>
        <shortName>K7</shortName>
    </alternativeName>
    <alternativeName>
        <fullName>Type-II keratin Kb7</fullName>
    </alternativeName>
</protein>